<comment type="function">
    <text>Probable thiol-disulfide oxidoreductase that may participate in various redox reactions.</text>
</comment>
<comment type="similarity">
    <text evidence="3">Belongs to the thioredoxin family.</text>
</comment>
<comment type="caution">
    <text evidence="3">The active site contains a CPDC motif which differs from the conserved CGPC motif.</text>
</comment>
<accession>Q5Z9Z3</accession>
<accession>A0A0P0WVX5</accession>
<protein>
    <recommendedName>
        <fullName>Thioredoxin-like protein Clot</fullName>
    </recommendedName>
    <alternativeName>
        <fullName>Thioredoxin Clot</fullName>
        <shortName>OsClot</shortName>
    </alternativeName>
</protein>
<evidence type="ECO:0000250" key="1"/>
<evidence type="ECO:0000255" key="2"/>
<evidence type="ECO:0000305" key="3"/>
<gene>
    <name type="ordered locus">Os06g0320000</name>
    <name type="ordered locus">LOC_Os06g21550</name>
    <name type="ORF">OsJ_21152</name>
    <name type="ORF">P0592B08.32</name>
</gene>
<dbReference type="EMBL" id="AP003543">
    <property type="protein sequence ID" value="BAD61617.1"/>
    <property type="molecule type" value="Genomic_DNA"/>
</dbReference>
<dbReference type="EMBL" id="AP008212">
    <property type="protein sequence ID" value="BAF19423.1"/>
    <property type="molecule type" value="Genomic_DNA"/>
</dbReference>
<dbReference type="EMBL" id="AP014962">
    <property type="protein sequence ID" value="BAS97498.1"/>
    <property type="molecule type" value="Genomic_DNA"/>
</dbReference>
<dbReference type="EMBL" id="CM000143">
    <property type="protein sequence ID" value="EAZ36813.1"/>
    <property type="molecule type" value="Genomic_DNA"/>
</dbReference>
<dbReference type="EMBL" id="AK242275">
    <property type="protein sequence ID" value="BAH01247.1"/>
    <property type="molecule type" value="mRNA"/>
</dbReference>
<dbReference type="RefSeq" id="XP_015641897.1">
    <property type="nucleotide sequence ID" value="XM_015786411.1"/>
</dbReference>
<dbReference type="SMR" id="Q5Z9Z3"/>
<dbReference type="FunCoup" id="Q5Z9Z3">
    <property type="interactions" value="2200"/>
</dbReference>
<dbReference type="STRING" id="39947.Q5Z9Z3"/>
<dbReference type="PaxDb" id="39947-Q5Z9Z3"/>
<dbReference type="EnsemblPlants" id="Os06t0320000-01">
    <property type="protein sequence ID" value="Os06t0320000-01"/>
    <property type="gene ID" value="Os06g0320000"/>
</dbReference>
<dbReference type="Gramene" id="Os06t0320000-01">
    <property type="protein sequence ID" value="Os06t0320000-01"/>
    <property type="gene ID" value="Os06g0320000"/>
</dbReference>
<dbReference type="KEGG" id="dosa:Os06g0320000"/>
<dbReference type="eggNOG" id="KOG3425">
    <property type="taxonomic scope" value="Eukaryota"/>
</dbReference>
<dbReference type="HOGENOM" id="CLU_120161_1_0_1"/>
<dbReference type="InParanoid" id="Q5Z9Z3"/>
<dbReference type="OMA" id="PRDYWKN"/>
<dbReference type="OrthoDB" id="78947at2759"/>
<dbReference type="Proteomes" id="UP000000763">
    <property type="component" value="Chromosome 6"/>
</dbReference>
<dbReference type="Proteomes" id="UP000007752">
    <property type="component" value="Chromosome 6"/>
</dbReference>
<dbReference type="Proteomes" id="UP000059680">
    <property type="component" value="Chromosome 6"/>
</dbReference>
<dbReference type="GO" id="GO:0005829">
    <property type="term" value="C:cytosol"/>
    <property type="evidence" value="ECO:0000318"/>
    <property type="project" value="GO_Central"/>
</dbReference>
<dbReference type="GO" id="GO:0047134">
    <property type="term" value="F:protein-disulfide reductase [NAD(P)H] activity"/>
    <property type="evidence" value="ECO:0000318"/>
    <property type="project" value="GO_Central"/>
</dbReference>
<dbReference type="FunFam" id="3.40.30.10:FF:000259">
    <property type="entry name" value="Thioredoxin-like protein Clot"/>
    <property type="match status" value="1"/>
</dbReference>
<dbReference type="Gene3D" id="3.40.30.10">
    <property type="entry name" value="Glutaredoxin"/>
    <property type="match status" value="1"/>
</dbReference>
<dbReference type="InterPro" id="IPR036249">
    <property type="entry name" value="Thioredoxin-like_sf"/>
</dbReference>
<dbReference type="InterPro" id="IPR045108">
    <property type="entry name" value="TXNDC17-like"/>
</dbReference>
<dbReference type="InterPro" id="IPR010357">
    <property type="entry name" value="TXNDC17_dom"/>
</dbReference>
<dbReference type="PANTHER" id="PTHR12452">
    <property type="entry name" value="42-9-9 PROTEIN-RELATED"/>
    <property type="match status" value="1"/>
</dbReference>
<dbReference type="PANTHER" id="PTHR12452:SF0">
    <property type="entry name" value="THIOREDOXIN DOMAIN-CONTAINING PROTEIN 17"/>
    <property type="match status" value="1"/>
</dbReference>
<dbReference type="Pfam" id="PF06110">
    <property type="entry name" value="TXD17-like_Trx"/>
    <property type="match status" value="1"/>
</dbReference>
<dbReference type="SUPFAM" id="SSF52833">
    <property type="entry name" value="Thioredoxin-like"/>
    <property type="match status" value="1"/>
</dbReference>
<keyword id="KW-1015">Disulfide bond</keyword>
<keyword id="KW-0249">Electron transport</keyword>
<keyword id="KW-0676">Redox-active center</keyword>
<keyword id="KW-1185">Reference proteome</keyword>
<keyword id="KW-0813">Transport</keyword>
<name>OCLOT_ORYSJ</name>
<reference key="1">
    <citation type="journal article" date="2005" name="Nature">
        <title>The map-based sequence of the rice genome.</title>
        <authorList>
            <consortium name="International rice genome sequencing project (IRGSP)"/>
        </authorList>
    </citation>
    <scope>NUCLEOTIDE SEQUENCE [LARGE SCALE GENOMIC DNA]</scope>
    <source>
        <strain>cv. Nipponbare</strain>
    </source>
</reference>
<reference key="2">
    <citation type="journal article" date="2008" name="Nucleic Acids Res.">
        <title>The rice annotation project database (RAP-DB): 2008 update.</title>
        <authorList>
            <consortium name="The rice annotation project (RAP)"/>
        </authorList>
    </citation>
    <scope>GENOME REANNOTATION</scope>
    <source>
        <strain>cv. Nipponbare</strain>
    </source>
</reference>
<reference key="3">
    <citation type="journal article" date="2013" name="Rice">
        <title>Improvement of the Oryza sativa Nipponbare reference genome using next generation sequence and optical map data.</title>
        <authorList>
            <person name="Kawahara Y."/>
            <person name="de la Bastide M."/>
            <person name="Hamilton J.P."/>
            <person name="Kanamori H."/>
            <person name="McCombie W.R."/>
            <person name="Ouyang S."/>
            <person name="Schwartz D.C."/>
            <person name="Tanaka T."/>
            <person name="Wu J."/>
            <person name="Zhou S."/>
            <person name="Childs K.L."/>
            <person name="Davidson R.M."/>
            <person name="Lin H."/>
            <person name="Quesada-Ocampo L."/>
            <person name="Vaillancourt B."/>
            <person name="Sakai H."/>
            <person name="Lee S.S."/>
            <person name="Kim J."/>
            <person name="Numa H."/>
            <person name="Itoh T."/>
            <person name="Buell C.R."/>
            <person name="Matsumoto T."/>
        </authorList>
    </citation>
    <scope>GENOME REANNOTATION</scope>
    <source>
        <strain>cv. Nipponbare</strain>
    </source>
</reference>
<reference key="4">
    <citation type="journal article" date="2005" name="PLoS Biol.">
        <title>The genomes of Oryza sativa: a history of duplications.</title>
        <authorList>
            <person name="Yu J."/>
            <person name="Wang J."/>
            <person name="Lin W."/>
            <person name="Li S."/>
            <person name="Li H."/>
            <person name="Zhou J."/>
            <person name="Ni P."/>
            <person name="Dong W."/>
            <person name="Hu S."/>
            <person name="Zeng C."/>
            <person name="Zhang J."/>
            <person name="Zhang Y."/>
            <person name="Li R."/>
            <person name="Xu Z."/>
            <person name="Li S."/>
            <person name="Li X."/>
            <person name="Zheng H."/>
            <person name="Cong L."/>
            <person name="Lin L."/>
            <person name="Yin J."/>
            <person name="Geng J."/>
            <person name="Li G."/>
            <person name="Shi J."/>
            <person name="Liu J."/>
            <person name="Lv H."/>
            <person name="Li J."/>
            <person name="Wang J."/>
            <person name="Deng Y."/>
            <person name="Ran L."/>
            <person name="Shi X."/>
            <person name="Wang X."/>
            <person name="Wu Q."/>
            <person name="Li C."/>
            <person name="Ren X."/>
            <person name="Wang J."/>
            <person name="Wang X."/>
            <person name="Li D."/>
            <person name="Liu D."/>
            <person name="Zhang X."/>
            <person name="Ji Z."/>
            <person name="Zhao W."/>
            <person name="Sun Y."/>
            <person name="Zhang Z."/>
            <person name="Bao J."/>
            <person name="Han Y."/>
            <person name="Dong L."/>
            <person name="Ji J."/>
            <person name="Chen P."/>
            <person name="Wu S."/>
            <person name="Liu J."/>
            <person name="Xiao Y."/>
            <person name="Bu D."/>
            <person name="Tan J."/>
            <person name="Yang L."/>
            <person name="Ye C."/>
            <person name="Zhang J."/>
            <person name="Xu J."/>
            <person name="Zhou Y."/>
            <person name="Yu Y."/>
            <person name="Zhang B."/>
            <person name="Zhuang S."/>
            <person name="Wei H."/>
            <person name="Liu B."/>
            <person name="Lei M."/>
            <person name="Yu H."/>
            <person name="Li Y."/>
            <person name="Xu H."/>
            <person name="Wei S."/>
            <person name="He X."/>
            <person name="Fang L."/>
            <person name="Zhang Z."/>
            <person name="Zhang Y."/>
            <person name="Huang X."/>
            <person name="Su Z."/>
            <person name="Tong W."/>
            <person name="Li J."/>
            <person name="Tong Z."/>
            <person name="Li S."/>
            <person name="Ye J."/>
            <person name="Wang L."/>
            <person name="Fang L."/>
            <person name="Lei T."/>
            <person name="Chen C.-S."/>
            <person name="Chen H.-C."/>
            <person name="Xu Z."/>
            <person name="Li H."/>
            <person name="Huang H."/>
            <person name="Zhang F."/>
            <person name="Xu H."/>
            <person name="Li N."/>
            <person name="Zhao C."/>
            <person name="Li S."/>
            <person name="Dong L."/>
            <person name="Huang Y."/>
            <person name="Li L."/>
            <person name="Xi Y."/>
            <person name="Qi Q."/>
            <person name="Li W."/>
            <person name="Zhang B."/>
            <person name="Hu W."/>
            <person name="Zhang Y."/>
            <person name="Tian X."/>
            <person name="Jiao Y."/>
            <person name="Liang X."/>
            <person name="Jin J."/>
            <person name="Gao L."/>
            <person name="Zheng W."/>
            <person name="Hao B."/>
            <person name="Liu S.-M."/>
            <person name="Wang W."/>
            <person name="Yuan L."/>
            <person name="Cao M."/>
            <person name="McDermott J."/>
            <person name="Samudrala R."/>
            <person name="Wang J."/>
            <person name="Wong G.K.-S."/>
            <person name="Yang H."/>
        </authorList>
    </citation>
    <scope>NUCLEOTIDE SEQUENCE [LARGE SCALE GENOMIC DNA]</scope>
    <source>
        <strain>cv. Nipponbare</strain>
    </source>
</reference>
<reference key="5">
    <citation type="submission" date="2006-10" db="EMBL/GenBank/DDBJ databases">
        <title>Oryza sativa full length cDNA.</title>
        <authorList>
            <consortium name="The rice full-length cDNA consortium"/>
        </authorList>
    </citation>
    <scope>NUCLEOTIDE SEQUENCE [LARGE SCALE MRNA]</scope>
    <source>
        <strain>cv. Nipponbare</strain>
    </source>
</reference>
<reference key="6">
    <citation type="journal article" date="2009" name="Mol. Plant">
        <title>Comparative genomic study of the thioredoxin family in photosynthetic organisms with emphasis on Populus trichocarpa.</title>
        <authorList>
            <person name="Chibani K."/>
            <person name="Wingsle G."/>
            <person name="Jacquot J.P."/>
            <person name="Gelhaye E."/>
            <person name="Rouhier N."/>
        </authorList>
    </citation>
    <scope>GENE FAMILY</scope>
    <scope>NOMENCLATURE</scope>
</reference>
<feature type="chain" id="PRO_0000394856" description="Thioredoxin-like protein Clot">
    <location>
        <begin position="1"/>
        <end position="139"/>
    </location>
</feature>
<feature type="domain" description="Thioredoxin">
    <location>
        <begin position="1"/>
        <end position="136"/>
    </location>
</feature>
<feature type="active site" description="Nucleophile" evidence="2">
    <location>
        <position position="49"/>
    </location>
</feature>
<feature type="active site" description="Nucleophile" evidence="2">
    <location>
        <position position="52"/>
    </location>
</feature>
<feature type="disulfide bond" description="Redox-active" evidence="1">
    <location>
        <begin position="49"/>
        <end position="52"/>
    </location>
</feature>
<proteinExistence type="evidence at transcript level"/>
<sequence length="139" mass="15232">MTVEKVDATVADFDAHFDKLFAAGDDAEGKVKLLLFLADRDASSNQTWCPDCNVAEPVIYDRVEAAAKGKEKDVVLLRAYVGDKPTWRDPAHPWRADPRFRLTGVPTLIRWENGAAAARLGDDEAHLADKVDAVVNAAN</sequence>
<organism>
    <name type="scientific">Oryza sativa subsp. japonica</name>
    <name type="common">Rice</name>
    <dbReference type="NCBI Taxonomy" id="39947"/>
    <lineage>
        <taxon>Eukaryota</taxon>
        <taxon>Viridiplantae</taxon>
        <taxon>Streptophyta</taxon>
        <taxon>Embryophyta</taxon>
        <taxon>Tracheophyta</taxon>
        <taxon>Spermatophyta</taxon>
        <taxon>Magnoliopsida</taxon>
        <taxon>Liliopsida</taxon>
        <taxon>Poales</taxon>
        <taxon>Poaceae</taxon>
        <taxon>BOP clade</taxon>
        <taxon>Oryzoideae</taxon>
        <taxon>Oryzeae</taxon>
        <taxon>Oryzinae</taxon>
        <taxon>Oryza</taxon>
        <taxon>Oryza sativa</taxon>
    </lineage>
</organism>